<dbReference type="EC" id="7.1.2.2" evidence="1"/>
<dbReference type="EMBL" id="DQ347959">
    <property type="protein sequence ID" value="ABC56285.1"/>
    <property type="molecule type" value="Genomic_DNA"/>
</dbReference>
<dbReference type="EMBL" id="AM087200">
    <property type="protein sequence ID" value="CAJ32378.1"/>
    <property type="molecule type" value="Genomic_DNA"/>
</dbReference>
<dbReference type="RefSeq" id="AP_004913.1">
    <property type="nucleotide sequence ID" value="AC_000188.1"/>
</dbReference>
<dbReference type="RefSeq" id="YP_008563073.1">
    <property type="nucleotide sequence ID" value="NC_007898.3"/>
</dbReference>
<dbReference type="SMR" id="Q2MIB5"/>
<dbReference type="FunCoup" id="Q2MIB5">
    <property type="interactions" value="309"/>
</dbReference>
<dbReference type="STRING" id="4081.Q2MIB5"/>
<dbReference type="PaxDb" id="4081-Solyc06g072540.1.1"/>
<dbReference type="GeneID" id="3950425"/>
<dbReference type="KEGG" id="sly:3950425"/>
<dbReference type="eggNOG" id="KOG1353">
    <property type="taxonomic scope" value="Eukaryota"/>
</dbReference>
<dbReference type="InParanoid" id="Q2MIB5"/>
<dbReference type="OrthoDB" id="1273573at2759"/>
<dbReference type="Proteomes" id="UP000004994">
    <property type="component" value="Chloroplast"/>
</dbReference>
<dbReference type="ExpressionAtlas" id="Q2MIB5">
    <property type="expression patterns" value="baseline and differential"/>
</dbReference>
<dbReference type="GO" id="GO:0009535">
    <property type="term" value="C:chloroplast thylakoid membrane"/>
    <property type="evidence" value="ECO:0007669"/>
    <property type="project" value="UniProtKB-SubCell"/>
</dbReference>
<dbReference type="GO" id="GO:0045259">
    <property type="term" value="C:proton-transporting ATP synthase complex"/>
    <property type="evidence" value="ECO:0007669"/>
    <property type="project" value="UniProtKB-KW"/>
</dbReference>
<dbReference type="GO" id="GO:0043531">
    <property type="term" value="F:ADP binding"/>
    <property type="evidence" value="ECO:0000318"/>
    <property type="project" value="GO_Central"/>
</dbReference>
<dbReference type="GO" id="GO:0005524">
    <property type="term" value="F:ATP binding"/>
    <property type="evidence" value="ECO:0000318"/>
    <property type="project" value="GO_Central"/>
</dbReference>
<dbReference type="GO" id="GO:0046933">
    <property type="term" value="F:proton-transporting ATP synthase activity, rotational mechanism"/>
    <property type="evidence" value="ECO:0007669"/>
    <property type="project" value="UniProtKB-UniRule"/>
</dbReference>
<dbReference type="GO" id="GO:0015986">
    <property type="term" value="P:proton motive force-driven ATP synthesis"/>
    <property type="evidence" value="ECO:0000318"/>
    <property type="project" value="GO_Central"/>
</dbReference>
<dbReference type="CDD" id="cd18113">
    <property type="entry name" value="ATP-synt_F1_alpha_C"/>
    <property type="match status" value="1"/>
</dbReference>
<dbReference type="CDD" id="cd18116">
    <property type="entry name" value="ATP-synt_F1_alpha_N"/>
    <property type="match status" value="1"/>
</dbReference>
<dbReference type="CDD" id="cd01132">
    <property type="entry name" value="F1-ATPase_alpha_CD"/>
    <property type="match status" value="1"/>
</dbReference>
<dbReference type="FunFam" id="1.20.150.20:FF:000001">
    <property type="entry name" value="ATP synthase subunit alpha"/>
    <property type="match status" value="1"/>
</dbReference>
<dbReference type="FunFam" id="2.40.30.20:FF:000001">
    <property type="entry name" value="ATP synthase subunit alpha"/>
    <property type="match status" value="1"/>
</dbReference>
<dbReference type="FunFam" id="3.40.50.300:FF:000002">
    <property type="entry name" value="ATP synthase subunit alpha"/>
    <property type="match status" value="1"/>
</dbReference>
<dbReference type="Gene3D" id="2.40.30.20">
    <property type="match status" value="1"/>
</dbReference>
<dbReference type="Gene3D" id="1.20.150.20">
    <property type="entry name" value="ATP synthase alpha/beta chain, C-terminal domain"/>
    <property type="match status" value="1"/>
</dbReference>
<dbReference type="Gene3D" id="3.40.50.300">
    <property type="entry name" value="P-loop containing nucleotide triphosphate hydrolases"/>
    <property type="match status" value="1"/>
</dbReference>
<dbReference type="HAMAP" id="MF_01346">
    <property type="entry name" value="ATP_synth_alpha_bact"/>
    <property type="match status" value="1"/>
</dbReference>
<dbReference type="InterPro" id="IPR023366">
    <property type="entry name" value="ATP_synth_asu-like_sf"/>
</dbReference>
<dbReference type="InterPro" id="IPR000793">
    <property type="entry name" value="ATP_synth_asu_C"/>
</dbReference>
<dbReference type="InterPro" id="IPR038376">
    <property type="entry name" value="ATP_synth_asu_C_sf"/>
</dbReference>
<dbReference type="InterPro" id="IPR033732">
    <property type="entry name" value="ATP_synth_F1_a_nt-bd_dom"/>
</dbReference>
<dbReference type="InterPro" id="IPR005294">
    <property type="entry name" value="ATP_synth_F1_asu"/>
</dbReference>
<dbReference type="InterPro" id="IPR020003">
    <property type="entry name" value="ATPase_a/bsu_AS"/>
</dbReference>
<dbReference type="InterPro" id="IPR004100">
    <property type="entry name" value="ATPase_F1/V1/A1_a/bsu_N"/>
</dbReference>
<dbReference type="InterPro" id="IPR036121">
    <property type="entry name" value="ATPase_F1/V1/A1_a/bsu_N_sf"/>
</dbReference>
<dbReference type="InterPro" id="IPR000194">
    <property type="entry name" value="ATPase_F1/V1/A1_a/bsu_nucl-bd"/>
</dbReference>
<dbReference type="InterPro" id="IPR027417">
    <property type="entry name" value="P-loop_NTPase"/>
</dbReference>
<dbReference type="NCBIfam" id="TIGR00962">
    <property type="entry name" value="atpA"/>
    <property type="match status" value="1"/>
</dbReference>
<dbReference type="NCBIfam" id="NF009884">
    <property type="entry name" value="PRK13343.1"/>
    <property type="match status" value="1"/>
</dbReference>
<dbReference type="PANTHER" id="PTHR48082">
    <property type="entry name" value="ATP SYNTHASE SUBUNIT ALPHA, MITOCHONDRIAL"/>
    <property type="match status" value="1"/>
</dbReference>
<dbReference type="PANTHER" id="PTHR48082:SF2">
    <property type="entry name" value="ATP SYNTHASE SUBUNIT ALPHA, MITOCHONDRIAL"/>
    <property type="match status" value="1"/>
</dbReference>
<dbReference type="Pfam" id="PF00006">
    <property type="entry name" value="ATP-synt_ab"/>
    <property type="match status" value="1"/>
</dbReference>
<dbReference type="Pfam" id="PF00306">
    <property type="entry name" value="ATP-synt_ab_C"/>
    <property type="match status" value="1"/>
</dbReference>
<dbReference type="Pfam" id="PF02874">
    <property type="entry name" value="ATP-synt_ab_N"/>
    <property type="match status" value="1"/>
</dbReference>
<dbReference type="PIRSF" id="PIRSF039088">
    <property type="entry name" value="F_ATPase_subunit_alpha"/>
    <property type="match status" value="1"/>
</dbReference>
<dbReference type="SUPFAM" id="SSF47917">
    <property type="entry name" value="C-terminal domain of alpha and beta subunits of F1 ATP synthase"/>
    <property type="match status" value="1"/>
</dbReference>
<dbReference type="SUPFAM" id="SSF50615">
    <property type="entry name" value="N-terminal domain of alpha and beta subunits of F1 ATP synthase"/>
    <property type="match status" value="1"/>
</dbReference>
<dbReference type="SUPFAM" id="SSF52540">
    <property type="entry name" value="P-loop containing nucleoside triphosphate hydrolases"/>
    <property type="match status" value="1"/>
</dbReference>
<dbReference type="PROSITE" id="PS00152">
    <property type="entry name" value="ATPASE_ALPHA_BETA"/>
    <property type="match status" value="1"/>
</dbReference>
<sequence length="507" mass="55411">MVTIRADEISNIIRERIEQYNREVKIVNTGTVLQVGDGIARIHGLDEVMAGELVEFEEGTIGIALNLESNNVGVVLMGDGLLIQEGSSVKATGRIAQIPVSEAYLGRVVNALAKPIDGRGEISASEFRLIESAAPGIISRRSVYEPLQTGLIAIDSMIPIGRGQRELIIGDRQTGKTAVATDTILNQQGQNVICVYVAIGQKASSVAQVVTTLQERGAMEYTIVVAETADSPATLQYLAPYTGAALAEYFMYRERHTLIIYDDLSKQAQAYRQMSLLLRRPPGREAYPGDVFYLHSRLLERAAKLSSSLGEGSMTALPIVETQSGDVSAYIPTNVISITDGQIFLSADLFNSGIRPAINVGISVSRVGSAAQIKAMKQVAGKLKLELAQFAELEAFAQFASDLDKATQNQLARGQRLRELLKQSQSAPLTVEEQIMTIYTGTNGYLDSLEVGQVRKFLVELRTYLKTTKPQFQEIISSTKTFTEEAEALLKEAIQEQMDRFILQEQA</sequence>
<comment type="function">
    <text evidence="1">Produces ATP from ADP in the presence of a proton gradient across the membrane. The alpha chain is a regulatory subunit.</text>
</comment>
<comment type="catalytic activity">
    <reaction evidence="1">
        <text>ATP + H2O + 4 H(+)(in) = ADP + phosphate + 5 H(+)(out)</text>
        <dbReference type="Rhea" id="RHEA:57720"/>
        <dbReference type="ChEBI" id="CHEBI:15377"/>
        <dbReference type="ChEBI" id="CHEBI:15378"/>
        <dbReference type="ChEBI" id="CHEBI:30616"/>
        <dbReference type="ChEBI" id="CHEBI:43474"/>
        <dbReference type="ChEBI" id="CHEBI:456216"/>
        <dbReference type="EC" id="7.1.2.2"/>
    </reaction>
</comment>
<comment type="subunit">
    <text evidence="1">F-type ATPases have 2 components, CF(1) - the catalytic core - and CF(0) - the membrane proton channel. CF(1) has five subunits: alpha(3), beta(3), gamma(1), delta(1), epsilon(1). CF(0) has four main subunits: a, b, b' and c.</text>
</comment>
<comment type="subcellular location">
    <subcellularLocation>
        <location evidence="1">Plastid</location>
        <location evidence="1">Chloroplast thylakoid membrane</location>
        <topology evidence="1">Peripheral membrane protein</topology>
    </subcellularLocation>
</comment>
<comment type="similarity">
    <text evidence="1">Belongs to the ATPase alpha/beta chains family.</text>
</comment>
<keyword id="KW-0066">ATP synthesis</keyword>
<keyword id="KW-0067">ATP-binding</keyword>
<keyword id="KW-0139">CF(1)</keyword>
<keyword id="KW-0150">Chloroplast</keyword>
<keyword id="KW-0375">Hydrogen ion transport</keyword>
<keyword id="KW-0406">Ion transport</keyword>
<keyword id="KW-0472">Membrane</keyword>
<keyword id="KW-0547">Nucleotide-binding</keyword>
<keyword id="KW-0934">Plastid</keyword>
<keyword id="KW-1185">Reference proteome</keyword>
<keyword id="KW-0793">Thylakoid</keyword>
<keyword id="KW-1278">Translocase</keyword>
<keyword id="KW-0813">Transport</keyword>
<feature type="chain" id="PRO_0000238426" description="ATP synthase subunit alpha, chloroplastic">
    <location>
        <begin position="1"/>
        <end position="507"/>
    </location>
</feature>
<feature type="binding site" evidence="1">
    <location>
        <begin position="170"/>
        <end position="177"/>
    </location>
    <ligand>
        <name>ATP</name>
        <dbReference type="ChEBI" id="CHEBI:30616"/>
    </ligand>
</feature>
<feature type="site" description="Required for activity" evidence="1">
    <location>
        <position position="363"/>
    </location>
</feature>
<organism>
    <name type="scientific">Solanum lycopersicum</name>
    <name type="common">Tomato</name>
    <name type="synonym">Lycopersicon esculentum</name>
    <dbReference type="NCBI Taxonomy" id="4081"/>
    <lineage>
        <taxon>Eukaryota</taxon>
        <taxon>Viridiplantae</taxon>
        <taxon>Streptophyta</taxon>
        <taxon>Embryophyta</taxon>
        <taxon>Tracheophyta</taxon>
        <taxon>Spermatophyta</taxon>
        <taxon>Magnoliopsida</taxon>
        <taxon>eudicotyledons</taxon>
        <taxon>Gunneridae</taxon>
        <taxon>Pentapetalae</taxon>
        <taxon>asterids</taxon>
        <taxon>lamiids</taxon>
        <taxon>Solanales</taxon>
        <taxon>Solanaceae</taxon>
        <taxon>Solanoideae</taxon>
        <taxon>Solaneae</taxon>
        <taxon>Solanum</taxon>
        <taxon>Solanum subgen. Lycopersicon</taxon>
    </lineage>
</organism>
<accession>Q2MIB5</accession>
<gene>
    <name evidence="1" type="primary">atpA</name>
</gene>
<geneLocation type="chloroplast"/>
<protein>
    <recommendedName>
        <fullName evidence="1">ATP synthase subunit alpha, chloroplastic</fullName>
        <ecNumber evidence="1">7.1.2.2</ecNumber>
    </recommendedName>
    <alternativeName>
        <fullName evidence="1">ATP synthase F1 sector subunit alpha</fullName>
    </alternativeName>
    <alternativeName>
        <fullName evidence="1">F-ATPase subunit alpha</fullName>
    </alternativeName>
</protein>
<evidence type="ECO:0000255" key="1">
    <source>
        <dbReference type="HAMAP-Rule" id="MF_01346"/>
    </source>
</evidence>
<proteinExistence type="inferred from homology"/>
<reference key="1">
    <citation type="journal article" date="2006" name="Theor. Appl. Genet.">
        <title>Complete chloroplast genome sequences of Solanum bulbocastanum, Solanum lycopersicum and comparative analyses with other Solanaceae genomes.</title>
        <authorList>
            <person name="Daniell H."/>
            <person name="Lee S.-B."/>
            <person name="Grevich J."/>
            <person name="Saski C."/>
            <person name="Quesada-Vargas T."/>
            <person name="Guda C."/>
            <person name="Tomkins J."/>
            <person name="Jansen R.K."/>
        </authorList>
    </citation>
    <scope>NUCLEOTIDE SEQUENCE [LARGE SCALE GENOMIC DNA]</scope>
    <source>
        <strain>cv. LA3023</strain>
    </source>
</reference>
<reference key="2">
    <citation type="journal article" date="2006" name="J. Mol. Evol.">
        <title>Sequence of the tomato chloroplast DNA and evolutionary comparison of solanaceous plastid genomes.</title>
        <authorList>
            <person name="Kahlau S."/>
            <person name="Aspinall S."/>
            <person name="Gray J.C."/>
            <person name="Bock R."/>
        </authorList>
    </citation>
    <scope>NUCLEOTIDE SEQUENCE [LARGE SCALE GENOMIC DNA]</scope>
    <source>
        <strain>cv. IPA-6</strain>
    </source>
</reference>
<name>ATPA_SOLLC</name>